<gene>
    <name evidence="1" type="primary">cmk</name>
    <name type="ordered locus">MmarC7_1649</name>
</gene>
<sequence>MIITIGGLPGTGTTTTSKLISEKYGLNHVCAGFIFRDMAKERNMTLQEFSSYAETNTEVDNEIDRRQVEAAQSGDLILEGRLAGWILKKSDIKPDLSIWLKADPMVRCIRISERENENVDLALEKMISREASEKKRYKEIYNIEIDDLSIYDIVIESSKWDANGVFNIIEKAIENLKA</sequence>
<organism>
    <name type="scientific">Methanococcus maripaludis (strain C7 / ATCC BAA-1331)</name>
    <dbReference type="NCBI Taxonomy" id="426368"/>
    <lineage>
        <taxon>Archaea</taxon>
        <taxon>Methanobacteriati</taxon>
        <taxon>Methanobacteriota</taxon>
        <taxon>Methanomada group</taxon>
        <taxon>Methanococci</taxon>
        <taxon>Methanococcales</taxon>
        <taxon>Methanococcaceae</taxon>
        <taxon>Methanococcus</taxon>
    </lineage>
</organism>
<feature type="chain" id="PRO_1000005676" description="Cytidylate kinase">
    <location>
        <begin position="1"/>
        <end position="178"/>
    </location>
</feature>
<feature type="binding site" evidence="1">
    <location>
        <begin position="7"/>
        <end position="15"/>
    </location>
    <ligand>
        <name>ATP</name>
        <dbReference type="ChEBI" id="CHEBI:30616"/>
    </ligand>
</feature>
<accession>A6VJT1</accession>
<evidence type="ECO:0000255" key="1">
    <source>
        <dbReference type="HAMAP-Rule" id="MF_00239"/>
    </source>
</evidence>
<name>KCY_METM7</name>
<reference key="1">
    <citation type="submission" date="2007-06" db="EMBL/GenBank/DDBJ databases">
        <title>Complete sequence of Methanococcus maripaludis C7.</title>
        <authorList>
            <consortium name="US DOE Joint Genome Institute"/>
            <person name="Copeland A."/>
            <person name="Lucas S."/>
            <person name="Lapidus A."/>
            <person name="Barry K."/>
            <person name="Glavina del Rio T."/>
            <person name="Dalin E."/>
            <person name="Tice H."/>
            <person name="Pitluck S."/>
            <person name="Clum A."/>
            <person name="Schmutz J."/>
            <person name="Larimer F."/>
            <person name="Land M."/>
            <person name="Hauser L."/>
            <person name="Kyrpides N."/>
            <person name="Anderson I."/>
            <person name="Sieprawska-Lupa M."/>
            <person name="Whitman W.B."/>
            <person name="Richardson P."/>
        </authorList>
    </citation>
    <scope>NUCLEOTIDE SEQUENCE [LARGE SCALE GENOMIC DNA]</scope>
    <source>
        <strain>C7 / ATCC BAA-1331</strain>
    </source>
</reference>
<proteinExistence type="inferred from homology"/>
<protein>
    <recommendedName>
        <fullName evidence="1">Cytidylate kinase</fullName>
        <shortName evidence="1">CK</shortName>
        <ecNumber evidence="1">2.7.4.25</ecNumber>
    </recommendedName>
    <alternativeName>
        <fullName evidence="1">Cytidine monophosphate kinase</fullName>
        <shortName evidence="1">CMP kinase</shortName>
    </alternativeName>
</protein>
<comment type="catalytic activity">
    <reaction evidence="1">
        <text>CMP + ATP = CDP + ADP</text>
        <dbReference type="Rhea" id="RHEA:11600"/>
        <dbReference type="ChEBI" id="CHEBI:30616"/>
        <dbReference type="ChEBI" id="CHEBI:58069"/>
        <dbReference type="ChEBI" id="CHEBI:60377"/>
        <dbReference type="ChEBI" id="CHEBI:456216"/>
        <dbReference type="EC" id="2.7.4.25"/>
    </reaction>
</comment>
<comment type="catalytic activity">
    <reaction evidence="1">
        <text>dCMP + ATP = dCDP + ADP</text>
        <dbReference type="Rhea" id="RHEA:25094"/>
        <dbReference type="ChEBI" id="CHEBI:30616"/>
        <dbReference type="ChEBI" id="CHEBI:57566"/>
        <dbReference type="ChEBI" id="CHEBI:58593"/>
        <dbReference type="ChEBI" id="CHEBI:456216"/>
        <dbReference type="EC" id="2.7.4.25"/>
    </reaction>
</comment>
<comment type="subcellular location">
    <subcellularLocation>
        <location evidence="1">Cytoplasm</location>
    </subcellularLocation>
</comment>
<comment type="similarity">
    <text evidence="1">Belongs to the cytidylate kinase family. Type 2 subfamily.</text>
</comment>
<dbReference type="EC" id="2.7.4.25" evidence="1"/>
<dbReference type="EMBL" id="CP000745">
    <property type="protein sequence ID" value="ABR66707.1"/>
    <property type="molecule type" value="Genomic_DNA"/>
</dbReference>
<dbReference type="SMR" id="A6VJT1"/>
<dbReference type="STRING" id="426368.MmarC7_1649"/>
<dbReference type="KEGG" id="mmz:MmarC7_1649"/>
<dbReference type="eggNOG" id="arCOG01037">
    <property type="taxonomic scope" value="Archaea"/>
</dbReference>
<dbReference type="HOGENOM" id="CLU_079959_1_0_2"/>
<dbReference type="OrthoDB" id="31096at2157"/>
<dbReference type="GO" id="GO:0005737">
    <property type="term" value="C:cytoplasm"/>
    <property type="evidence" value="ECO:0007669"/>
    <property type="project" value="UniProtKB-SubCell"/>
</dbReference>
<dbReference type="GO" id="GO:0005524">
    <property type="term" value="F:ATP binding"/>
    <property type="evidence" value="ECO:0007669"/>
    <property type="project" value="UniProtKB-UniRule"/>
</dbReference>
<dbReference type="GO" id="GO:0036430">
    <property type="term" value="F:CMP kinase activity"/>
    <property type="evidence" value="ECO:0007669"/>
    <property type="project" value="RHEA"/>
</dbReference>
<dbReference type="GO" id="GO:0036431">
    <property type="term" value="F:dCMP kinase activity"/>
    <property type="evidence" value="ECO:0007669"/>
    <property type="project" value="RHEA"/>
</dbReference>
<dbReference type="GO" id="GO:0006220">
    <property type="term" value="P:pyrimidine nucleotide metabolic process"/>
    <property type="evidence" value="ECO:0007669"/>
    <property type="project" value="UniProtKB-UniRule"/>
</dbReference>
<dbReference type="CDD" id="cd02020">
    <property type="entry name" value="CMPK"/>
    <property type="match status" value="1"/>
</dbReference>
<dbReference type="Gene3D" id="3.40.50.300">
    <property type="entry name" value="P-loop containing nucleotide triphosphate hydrolases"/>
    <property type="match status" value="1"/>
</dbReference>
<dbReference type="HAMAP" id="MF_00239">
    <property type="entry name" value="Cytidyl_kinase_type2"/>
    <property type="match status" value="1"/>
</dbReference>
<dbReference type="InterPro" id="IPR011892">
    <property type="entry name" value="Cyt_kin_arch"/>
</dbReference>
<dbReference type="InterPro" id="IPR011994">
    <property type="entry name" value="Cytidylate_kinase_dom"/>
</dbReference>
<dbReference type="InterPro" id="IPR027417">
    <property type="entry name" value="P-loop_NTPase"/>
</dbReference>
<dbReference type="NCBIfam" id="TIGR02173">
    <property type="entry name" value="cyt_kin_arch"/>
    <property type="match status" value="1"/>
</dbReference>
<dbReference type="Pfam" id="PF13189">
    <property type="entry name" value="Cytidylate_kin2"/>
    <property type="match status" value="1"/>
</dbReference>
<dbReference type="SUPFAM" id="SSF52540">
    <property type="entry name" value="P-loop containing nucleoside triphosphate hydrolases"/>
    <property type="match status" value="1"/>
</dbReference>
<keyword id="KW-0067">ATP-binding</keyword>
<keyword id="KW-0963">Cytoplasm</keyword>
<keyword id="KW-0418">Kinase</keyword>
<keyword id="KW-0547">Nucleotide-binding</keyword>
<keyword id="KW-0808">Transferase</keyword>